<protein>
    <recommendedName>
        <fullName>Endoplasmic reticulum transmembrane protein 3</fullName>
    </recommendedName>
</protein>
<keyword id="KW-0256">Endoplasmic reticulum</keyword>
<keyword id="KW-0931">ER-Golgi transport</keyword>
<keyword id="KW-0472">Membrane</keyword>
<keyword id="KW-0653">Protein transport</keyword>
<keyword id="KW-1185">Reference proteome</keyword>
<keyword id="KW-0812">Transmembrane</keyword>
<keyword id="KW-1133">Transmembrane helix</keyword>
<keyword id="KW-0813">Transport</keyword>
<accession>Q07451</accession>
<accession>D6VRS7</accession>
<accession>P89895</accession>
<accession>Q7LGS8</accession>
<name>YET3_YEAST</name>
<feature type="chain" id="PRO_0000248402" description="Endoplasmic reticulum transmembrane protein 3">
    <location>
        <begin position="1"/>
        <end position="203"/>
    </location>
</feature>
<feature type="topological domain" description="Lumenal" evidence="1">
    <location>
        <begin position="1"/>
        <end position="6"/>
    </location>
</feature>
<feature type="transmembrane region" description="Helical" evidence="1">
    <location>
        <begin position="7"/>
        <end position="27"/>
    </location>
</feature>
<feature type="topological domain" description="Cytoplasmic" evidence="1">
    <location>
        <begin position="28"/>
        <end position="45"/>
    </location>
</feature>
<feature type="transmembrane region" description="Helical" evidence="1">
    <location>
        <begin position="46"/>
        <end position="66"/>
    </location>
</feature>
<feature type="topological domain" description="Lumenal" evidence="1">
    <location>
        <begin position="67"/>
        <end position="110"/>
    </location>
</feature>
<feature type="transmembrane region" description="Helical" evidence="1">
    <location>
        <begin position="111"/>
        <end position="131"/>
    </location>
</feature>
<feature type="topological domain" description="Cytoplasmic" evidence="1">
    <location>
        <begin position="132"/>
        <end position="203"/>
    </location>
</feature>
<feature type="region of interest" description="Disordered" evidence="2">
    <location>
        <begin position="142"/>
        <end position="171"/>
    </location>
</feature>
<proteinExistence type="evidence at protein level"/>
<evidence type="ECO:0000255" key="1"/>
<evidence type="ECO:0000256" key="2">
    <source>
        <dbReference type="SAM" id="MobiDB-lite"/>
    </source>
</evidence>
<evidence type="ECO:0000269" key="3">
    <source>
    </source>
</evidence>
<evidence type="ECO:0000269" key="4">
    <source>
    </source>
</evidence>
<evidence type="ECO:0000269" key="5">
    <source ref="6"/>
</evidence>
<evidence type="ECO:0000305" key="6"/>
<reference key="1">
    <citation type="journal article" date="1997" name="Nature">
        <title>The nucleotide sequence of Saccharomyces cerevisiae chromosome IV.</title>
        <authorList>
            <person name="Jacq C."/>
            <person name="Alt-Moerbe J."/>
            <person name="Andre B."/>
            <person name="Arnold W."/>
            <person name="Bahr A."/>
            <person name="Ballesta J.P.G."/>
            <person name="Bargues M."/>
            <person name="Baron L."/>
            <person name="Becker A."/>
            <person name="Biteau N."/>
            <person name="Bloecker H."/>
            <person name="Blugeon C."/>
            <person name="Boskovic J."/>
            <person name="Brandt P."/>
            <person name="Brueckner M."/>
            <person name="Buitrago M.J."/>
            <person name="Coster F."/>
            <person name="Delaveau T."/>
            <person name="del Rey F."/>
            <person name="Dujon B."/>
            <person name="Eide L.G."/>
            <person name="Garcia-Cantalejo J.M."/>
            <person name="Goffeau A."/>
            <person name="Gomez-Peris A."/>
            <person name="Granotier C."/>
            <person name="Hanemann V."/>
            <person name="Hankeln T."/>
            <person name="Hoheisel J.D."/>
            <person name="Jaeger W."/>
            <person name="Jimenez A."/>
            <person name="Jonniaux J.-L."/>
            <person name="Kraemer C."/>
            <person name="Kuester H."/>
            <person name="Laamanen P."/>
            <person name="Legros Y."/>
            <person name="Louis E.J."/>
            <person name="Moeller-Rieker S."/>
            <person name="Monnet A."/>
            <person name="Moro M."/>
            <person name="Mueller-Auer S."/>
            <person name="Nussbaumer B."/>
            <person name="Paricio N."/>
            <person name="Paulin L."/>
            <person name="Perea J."/>
            <person name="Perez-Alonso M."/>
            <person name="Perez-Ortin J.E."/>
            <person name="Pohl T.M."/>
            <person name="Prydz H."/>
            <person name="Purnelle B."/>
            <person name="Rasmussen S.W."/>
            <person name="Remacha M.A."/>
            <person name="Revuelta J.L."/>
            <person name="Rieger M."/>
            <person name="Salom D."/>
            <person name="Saluz H.P."/>
            <person name="Saiz J.E."/>
            <person name="Saren A.-M."/>
            <person name="Schaefer M."/>
            <person name="Scharfe M."/>
            <person name="Schmidt E.R."/>
            <person name="Schneider C."/>
            <person name="Scholler P."/>
            <person name="Schwarz S."/>
            <person name="Soler-Mira A."/>
            <person name="Urrestarazu L.A."/>
            <person name="Verhasselt P."/>
            <person name="Vissers S."/>
            <person name="Voet M."/>
            <person name="Volckaert G."/>
            <person name="Wagner G."/>
            <person name="Wambutt R."/>
            <person name="Wedler E."/>
            <person name="Wedler H."/>
            <person name="Woelfl S."/>
            <person name="Harris D.E."/>
            <person name="Bowman S."/>
            <person name="Brown D."/>
            <person name="Churcher C.M."/>
            <person name="Connor R."/>
            <person name="Dedman K."/>
            <person name="Gentles S."/>
            <person name="Hamlin N."/>
            <person name="Hunt S."/>
            <person name="Jones L."/>
            <person name="McDonald S."/>
            <person name="Murphy L.D."/>
            <person name="Niblett D."/>
            <person name="Odell C."/>
            <person name="Oliver K."/>
            <person name="Rajandream M.A."/>
            <person name="Richards C."/>
            <person name="Shore L."/>
            <person name="Walsh S.V."/>
            <person name="Barrell B.G."/>
            <person name="Dietrich F.S."/>
            <person name="Mulligan J.T."/>
            <person name="Allen E."/>
            <person name="Araujo R."/>
            <person name="Aviles E."/>
            <person name="Berno A."/>
            <person name="Carpenter J."/>
            <person name="Chen E."/>
            <person name="Cherry J.M."/>
            <person name="Chung E."/>
            <person name="Duncan M."/>
            <person name="Hunicke-Smith S."/>
            <person name="Hyman R.W."/>
            <person name="Komp C."/>
            <person name="Lashkari D."/>
            <person name="Lew H."/>
            <person name="Lin D."/>
            <person name="Mosedale D."/>
            <person name="Nakahara K."/>
            <person name="Namath A."/>
            <person name="Oefner P."/>
            <person name="Oh C."/>
            <person name="Petel F.X."/>
            <person name="Roberts D."/>
            <person name="Schramm S."/>
            <person name="Schroeder M."/>
            <person name="Shogren T."/>
            <person name="Shroff N."/>
            <person name="Winant A."/>
            <person name="Yelton M.A."/>
            <person name="Botstein D."/>
            <person name="Davis R.W."/>
            <person name="Johnston M."/>
            <person name="Andrews S."/>
            <person name="Brinkman R."/>
            <person name="Cooper J."/>
            <person name="Ding H."/>
            <person name="Du Z."/>
            <person name="Favello A."/>
            <person name="Fulton L."/>
            <person name="Gattung S."/>
            <person name="Greco T."/>
            <person name="Hallsworth K."/>
            <person name="Hawkins J."/>
            <person name="Hillier L.W."/>
            <person name="Jier M."/>
            <person name="Johnson D."/>
            <person name="Johnston L."/>
            <person name="Kirsten J."/>
            <person name="Kucaba T."/>
            <person name="Langston Y."/>
            <person name="Latreille P."/>
            <person name="Le T."/>
            <person name="Mardis E."/>
            <person name="Menezes S."/>
            <person name="Miller N."/>
            <person name="Nhan M."/>
            <person name="Pauley A."/>
            <person name="Peluso D."/>
            <person name="Rifkin L."/>
            <person name="Riles L."/>
            <person name="Taich A."/>
            <person name="Trevaskis E."/>
            <person name="Vignati D."/>
            <person name="Wilcox L."/>
            <person name="Wohldman P."/>
            <person name="Vaudin M."/>
            <person name="Wilson R."/>
            <person name="Waterston R."/>
            <person name="Albermann K."/>
            <person name="Hani J."/>
            <person name="Heumann K."/>
            <person name="Kleine K."/>
            <person name="Mewes H.-W."/>
            <person name="Zollner A."/>
            <person name="Zaccaria P."/>
        </authorList>
    </citation>
    <scope>NUCLEOTIDE SEQUENCE [LARGE SCALE GENOMIC DNA]</scope>
    <source>
        <strain>ATCC 204508 / S288c</strain>
    </source>
</reference>
<reference key="2">
    <citation type="journal article" date="2014" name="G3 (Bethesda)">
        <title>The reference genome sequence of Saccharomyces cerevisiae: Then and now.</title>
        <authorList>
            <person name="Engel S.R."/>
            <person name="Dietrich F.S."/>
            <person name="Fisk D.G."/>
            <person name="Binkley G."/>
            <person name="Balakrishnan R."/>
            <person name="Costanzo M.C."/>
            <person name="Dwight S.S."/>
            <person name="Hitz B.C."/>
            <person name="Karra K."/>
            <person name="Nash R.S."/>
            <person name="Weng S."/>
            <person name="Wong E.D."/>
            <person name="Lloyd P."/>
            <person name="Skrzypek M.S."/>
            <person name="Miyasato S.R."/>
            <person name="Simison M."/>
            <person name="Cherry J.M."/>
        </authorList>
    </citation>
    <scope>GENOME REANNOTATION</scope>
    <source>
        <strain>ATCC 204508 / S288c</strain>
    </source>
</reference>
<reference key="3">
    <citation type="journal article" date="2007" name="Genome Res.">
        <title>Approaching a complete repository of sequence-verified protein-encoding clones for Saccharomyces cerevisiae.</title>
        <authorList>
            <person name="Hu Y."/>
            <person name="Rolfs A."/>
            <person name="Bhullar B."/>
            <person name="Murthy T.V.S."/>
            <person name="Zhu C."/>
            <person name="Berger M.F."/>
            <person name="Camargo A.A."/>
            <person name="Kelley F."/>
            <person name="McCarron S."/>
            <person name="Jepson D."/>
            <person name="Richardson A."/>
            <person name="Raphael J."/>
            <person name="Moreira D."/>
            <person name="Taycher E."/>
            <person name="Zuo D."/>
            <person name="Mohr S."/>
            <person name="Kane M.F."/>
            <person name="Williamson J."/>
            <person name="Simpson A.J.G."/>
            <person name="Bulyk M.L."/>
            <person name="Harlow E."/>
            <person name="Marsischky G."/>
            <person name="Kolodner R.D."/>
            <person name="LaBaer J."/>
        </authorList>
    </citation>
    <scope>NUCLEOTIDE SEQUENCE [GENOMIC DNA]</scope>
    <source>
        <strain>ATCC 204508 / S288c</strain>
    </source>
</reference>
<reference key="4">
    <citation type="journal article" date="2003" name="Nature">
        <title>Global analysis of protein localization in budding yeast.</title>
        <authorList>
            <person name="Huh W.-K."/>
            <person name="Falvo J.V."/>
            <person name="Gerke L.C."/>
            <person name="Carroll A.S."/>
            <person name="Howson R.W."/>
            <person name="Weissman J.S."/>
            <person name="O'Shea E.K."/>
        </authorList>
    </citation>
    <scope>SUBCELLULAR LOCATION [LARGE SCALE ANALYSIS]</scope>
</reference>
<reference key="5">
    <citation type="journal article" date="2003" name="Nature">
        <title>Global analysis of protein expression in yeast.</title>
        <authorList>
            <person name="Ghaemmaghami S."/>
            <person name="Huh W.-K."/>
            <person name="Bower K."/>
            <person name="Howson R.W."/>
            <person name="Belle A."/>
            <person name="Dephoure N."/>
            <person name="O'Shea E.K."/>
            <person name="Weissman J.S."/>
        </authorList>
    </citation>
    <scope>LEVEL OF PROTEIN EXPRESSION [LARGE SCALE ANALYSIS]</scope>
</reference>
<reference key="6">
    <citation type="journal article" date="2006" name="J. Biol. Sci. (Faisalabad)">
        <title>YET1, YET2 and YET3 of Saccharomyces cerevisiae encode BAP31 homologs with partially overlapping functions.</title>
        <authorList>
            <person name="Toikkanen J.H."/>
            <person name="Fatal N."/>
            <person name="Hilden P."/>
            <person name="Makarow M."/>
            <person name="Kuismanen E."/>
        </authorList>
    </citation>
    <scope>FUNCTION</scope>
</reference>
<reference key="7">
    <citation type="journal article" date="2006" name="Proc. Natl. Acad. Sci. U.S.A.">
        <title>A global topology map of the Saccharomyces cerevisiae membrane proteome.</title>
        <authorList>
            <person name="Kim H."/>
            <person name="Melen K."/>
            <person name="Oesterberg M."/>
            <person name="von Heijne G."/>
        </authorList>
    </citation>
    <scope>TOPOLOGY [LARGE SCALE ANALYSIS]</scope>
    <source>
        <strain>ATCC 208353 / W303-1A</strain>
    </source>
</reference>
<organism>
    <name type="scientific">Saccharomyces cerevisiae (strain ATCC 204508 / S288c)</name>
    <name type="common">Baker's yeast</name>
    <dbReference type="NCBI Taxonomy" id="559292"/>
    <lineage>
        <taxon>Eukaryota</taxon>
        <taxon>Fungi</taxon>
        <taxon>Dikarya</taxon>
        <taxon>Ascomycota</taxon>
        <taxon>Saccharomycotina</taxon>
        <taxon>Saccharomycetes</taxon>
        <taxon>Saccharomycetales</taxon>
        <taxon>Saccharomycetaceae</taxon>
        <taxon>Saccharomyces</taxon>
    </lineage>
</organism>
<comment type="function">
    <text evidence="5">May play a role in anterograde transport of membrane proteins from the endoplasmic reticulum to the Golgi. May be involved in invertase secretion.</text>
</comment>
<comment type="subcellular location">
    <subcellularLocation>
        <location evidence="3">Endoplasmic reticulum membrane</location>
        <topology evidence="3">Multi-pass membrane protein</topology>
    </subcellularLocation>
</comment>
<comment type="miscellaneous">
    <text evidence="4">Present with 2840 molecules/cell in log phase SD medium.</text>
</comment>
<comment type="similarity">
    <text evidence="6">Belongs to the BCAP29/BCAP31 family.</text>
</comment>
<dbReference type="EMBL" id="Z74119">
    <property type="protein sequence ID" value="CAA98637.1"/>
    <property type="molecule type" value="Genomic_DNA"/>
</dbReference>
<dbReference type="EMBL" id="Z74120">
    <property type="protein sequence ID" value="CAA98638.1"/>
    <property type="molecule type" value="Genomic_DNA"/>
</dbReference>
<dbReference type="EMBL" id="AY558158">
    <property type="protein sequence ID" value="AAS56484.1"/>
    <property type="molecule type" value="Genomic_DNA"/>
</dbReference>
<dbReference type="EMBL" id="BK006938">
    <property type="protein sequence ID" value="DAA11787.1"/>
    <property type="molecule type" value="Genomic_DNA"/>
</dbReference>
<dbReference type="PIR" id="S67607">
    <property type="entry name" value="S67607"/>
</dbReference>
<dbReference type="RefSeq" id="NP_010211.1">
    <property type="nucleotide sequence ID" value="NM_001180131.1"/>
</dbReference>
<dbReference type="SMR" id="Q07451"/>
<dbReference type="BioGRID" id="31989">
    <property type="interactions" value="85"/>
</dbReference>
<dbReference type="DIP" id="DIP-2993N"/>
<dbReference type="FunCoup" id="Q07451">
    <property type="interactions" value="790"/>
</dbReference>
<dbReference type="IntAct" id="Q07451">
    <property type="interactions" value="29"/>
</dbReference>
<dbReference type="MINT" id="Q07451"/>
<dbReference type="STRING" id="4932.YDL072C"/>
<dbReference type="iPTMnet" id="Q07451"/>
<dbReference type="PaxDb" id="4932-YDL072C"/>
<dbReference type="PeptideAtlas" id="Q07451"/>
<dbReference type="TopDownProteomics" id="Q07451"/>
<dbReference type="EnsemblFungi" id="YDL072C_mRNA">
    <property type="protein sequence ID" value="YDL072C"/>
    <property type="gene ID" value="YDL072C"/>
</dbReference>
<dbReference type="GeneID" id="851487"/>
<dbReference type="KEGG" id="sce:YDL072C"/>
<dbReference type="AGR" id="SGD:S000002230"/>
<dbReference type="SGD" id="S000002230">
    <property type="gene designation" value="YET3"/>
</dbReference>
<dbReference type="VEuPathDB" id="FungiDB:YDL072C"/>
<dbReference type="eggNOG" id="KOG1962">
    <property type="taxonomic scope" value="Eukaryota"/>
</dbReference>
<dbReference type="GeneTree" id="ENSGT00390000011863"/>
<dbReference type="HOGENOM" id="CLU_087648_0_1_1"/>
<dbReference type="InParanoid" id="Q07451"/>
<dbReference type="OMA" id="FIDCINR"/>
<dbReference type="OrthoDB" id="435607at2759"/>
<dbReference type="BioCyc" id="YEAST:G3O-29483-MONOMER"/>
<dbReference type="Reactome" id="R-SCE-75153">
    <property type="pathway name" value="Apoptotic execution phase"/>
</dbReference>
<dbReference type="BioGRID-ORCS" id="851487">
    <property type="hits" value="1 hit in 10 CRISPR screens"/>
</dbReference>
<dbReference type="PRO" id="PR:Q07451"/>
<dbReference type="Proteomes" id="UP000002311">
    <property type="component" value="Chromosome IV"/>
</dbReference>
<dbReference type="RNAct" id="Q07451">
    <property type="molecule type" value="protein"/>
</dbReference>
<dbReference type="GO" id="GO:0005783">
    <property type="term" value="C:endoplasmic reticulum"/>
    <property type="evidence" value="ECO:0000314"/>
    <property type="project" value="SGD"/>
</dbReference>
<dbReference type="GO" id="GO:0005789">
    <property type="term" value="C:endoplasmic reticulum membrane"/>
    <property type="evidence" value="ECO:0000318"/>
    <property type="project" value="GO_Central"/>
</dbReference>
<dbReference type="GO" id="GO:0006888">
    <property type="term" value="P:endoplasmic reticulum to Golgi vesicle-mediated transport"/>
    <property type="evidence" value="ECO:0000318"/>
    <property type="project" value="GO_Central"/>
</dbReference>
<dbReference type="GO" id="GO:0006886">
    <property type="term" value="P:intracellular protein transport"/>
    <property type="evidence" value="ECO:0007669"/>
    <property type="project" value="InterPro"/>
</dbReference>
<dbReference type="GO" id="GO:0070973">
    <property type="term" value="P:protein localization to endoplasmic reticulum exit site"/>
    <property type="evidence" value="ECO:0000318"/>
    <property type="project" value="GO_Central"/>
</dbReference>
<dbReference type="InterPro" id="IPR008417">
    <property type="entry name" value="BAP29/BAP31"/>
</dbReference>
<dbReference type="InterPro" id="IPR040463">
    <property type="entry name" value="BAP29/BAP31_N"/>
</dbReference>
<dbReference type="PANTHER" id="PTHR12701">
    <property type="entry name" value="BCR-ASSOCIATED PROTEIN, BAP"/>
    <property type="match status" value="1"/>
</dbReference>
<dbReference type="PANTHER" id="PTHR12701:SF20">
    <property type="entry name" value="ENDOPLASMIC RETICULUM TRANSMEMBRANE PROTEIN"/>
    <property type="match status" value="1"/>
</dbReference>
<dbReference type="Pfam" id="PF05529">
    <property type="entry name" value="Bap31"/>
    <property type="match status" value="1"/>
</dbReference>
<sequence length="203" mass="22903">MSLYYTLVFAILVVEIFMFSILALPIPSRYRRPLTLLLLKPFKSSTVQVAIKCVLGFILLLFIDCINRVYSIDKELQLSSASQNNGAIIAQDRIEVLSRKFFAQRNMYLTGITLFLTFVVVRTFGLVIELLTMKDIYRASPPVASSDVKKNDSVTAEAAAQSGASKDDHGDEKNFELLKKIQDIDDEIARLKEKSESLQEEIN</sequence>
<gene>
    <name type="primary">YET3</name>
    <name type="ordered locus">YDL072C</name>
</gene>